<sequence>MTNIRKTHPLAKIINNSFIDLPTPPNISAWWNFGSLLGICLILQILTGLFLAMHYTSDTTTAFSSVTHICRDVNYGWIIRYMHANGASMFFICLYMHVGRGLYYGSYTFTETWNIGIILLFTIMATAFMGYVLPWGQMSFWGATVITNLLSAIPYIGTDLVQWIWGGFSVDKATLTRFFAFHFILPFVASALAAVHLLFLHETGSNNPSGIPSDSDKIPFHPYYTIKDILGALLLILILMLLVLFSPDLLGDPDNYIPANPLSTPPHIKPEWYFLFAYAILRSIPNKLGGVLALMLSILILAIIPLLHTSKQRGMMFRPISQCLFWLLVADLLTLTWIGGQPVEHPYITIGQLASILYFMILLVLMPITSIIENNILKW</sequence>
<accession>Q678S9</accession>
<reference key="1">
    <citation type="journal article" date="2004" name="Mol. Phylogenet. Evol.">
        <title>A phylogeny of the extant Phocidae inferred from complete mitochondrial DNA coding regions.</title>
        <authorList>
            <person name="Davis C.S."/>
            <person name="Delisle I."/>
            <person name="Stirling I."/>
            <person name="Siniff D.B."/>
            <person name="Strobeck C."/>
        </authorList>
    </citation>
    <scope>NUCLEOTIDE SEQUENCE [GENOMIC DNA]</scope>
</reference>
<feature type="chain" id="PRO_0000061128" description="Cytochrome b">
    <location>
        <begin position="1"/>
        <end position="379"/>
    </location>
</feature>
<feature type="transmembrane region" description="Helical" evidence="2">
    <location>
        <begin position="33"/>
        <end position="53"/>
    </location>
</feature>
<feature type="transmembrane region" description="Helical" evidence="2">
    <location>
        <begin position="77"/>
        <end position="98"/>
    </location>
</feature>
<feature type="transmembrane region" description="Helical" evidence="2">
    <location>
        <begin position="113"/>
        <end position="133"/>
    </location>
</feature>
<feature type="transmembrane region" description="Helical" evidence="2">
    <location>
        <begin position="178"/>
        <end position="198"/>
    </location>
</feature>
<feature type="transmembrane region" description="Helical" evidence="2">
    <location>
        <begin position="226"/>
        <end position="246"/>
    </location>
</feature>
<feature type="transmembrane region" description="Helical" evidence="2">
    <location>
        <begin position="288"/>
        <end position="308"/>
    </location>
</feature>
<feature type="transmembrane region" description="Helical" evidence="2">
    <location>
        <begin position="320"/>
        <end position="340"/>
    </location>
</feature>
<feature type="transmembrane region" description="Helical" evidence="2">
    <location>
        <begin position="347"/>
        <end position="367"/>
    </location>
</feature>
<feature type="binding site" description="axial binding residue" evidence="2">
    <location>
        <position position="83"/>
    </location>
    <ligand>
        <name>heme b</name>
        <dbReference type="ChEBI" id="CHEBI:60344"/>
        <label>b562</label>
    </ligand>
    <ligandPart>
        <name>Fe</name>
        <dbReference type="ChEBI" id="CHEBI:18248"/>
    </ligandPart>
</feature>
<feature type="binding site" description="axial binding residue" evidence="2">
    <location>
        <position position="97"/>
    </location>
    <ligand>
        <name>heme b</name>
        <dbReference type="ChEBI" id="CHEBI:60344"/>
        <label>b566</label>
    </ligand>
    <ligandPart>
        <name>Fe</name>
        <dbReference type="ChEBI" id="CHEBI:18248"/>
    </ligandPart>
</feature>
<feature type="binding site" description="axial binding residue" evidence="2">
    <location>
        <position position="182"/>
    </location>
    <ligand>
        <name>heme b</name>
        <dbReference type="ChEBI" id="CHEBI:60344"/>
        <label>b562</label>
    </ligand>
    <ligandPart>
        <name>Fe</name>
        <dbReference type="ChEBI" id="CHEBI:18248"/>
    </ligandPart>
</feature>
<feature type="binding site" description="axial binding residue" evidence="2">
    <location>
        <position position="196"/>
    </location>
    <ligand>
        <name>heme b</name>
        <dbReference type="ChEBI" id="CHEBI:60344"/>
        <label>b566</label>
    </ligand>
    <ligandPart>
        <name>Fe</name>
        <dbReference type="ChEBI" id="CHEBI:18248"/>
    </ligandPart>
</feature>
<feature type="binding site" evidence="2">
    <location>
        <position position="201"/>
    </location>
    <ligand>
        <name>a ubiquinone</name>
        <dbReference type="ChEBI" id="CHEBI:16389"/>
    </ligand>
</feature>
<keyword id="KW-0249">Electron transport</keyword>
<keyword id="KW-0349">Heme</keyword>
<keyword id="KW-0408">Iron</keyword>
<keyword id="KW-0472">Membrane</keyword>
<keyword id="KW-0479">Metal-binding</keyword>
<keyword id="KW-0496">Mitochondrion</keyword>
<keyword id="KW-0999">Mitochondrion inner membrane</keyword>
<keyword id="KW-0679">Respiratory chain</keyword>
<keyword id="KW-0812">Transmembrane</keyword>
<keyword id="KW-1133">Transmembrane helix</keyword>
<keyword id="KW-0813">Transport</keyword>
<keyword id="KW-0830">Ubiquinone</keyword>
<evidence type="ECO:0000250" key="1"/>
<evidence type="ECO:0000250" key="2">
    <source>
        <dbReference type="UniProtKB" id="P00157"/>
    </source>
</evidence>
<evidence type="ECO:0000255" key="3">
    <source>
        <dbReference type="PROSITE-ProRule" id="PRU00967"/>
    </source>
</evidence>
<evidence type="ECO:0000255" key="4">
    <source>
        <dbReference type="PROSITE-ProRule" id="PRU00968"/>
    </source>
</evidence>
<comment type="function">
    <text evidence="2">Component of the ubiquinol-cytochrome c reductase complex (complex III or cytochrome b-c1 complex) that is part of the mitochondrial respiratory chain. The b-c1 complex mediates electron transfer from ubiquinol to cytochrome c. Contributes to the generation of a proton gradient across the mitochondrial membrane that is then used for ATP synthesis.</text>
</comment>
<comment type="cofactor">
    <cofactor evidence="2">
        <name>heme b</name>
        <dbReference type="ChEBI" id="CHEBI:60344"/>
    </cofactor>
    <text evidence="2">Binds 2 heme b groups non-covalently.</text>
</comment>
<comment type="subunit">
    <text evidence="2">The cytochrome bc1 complex contains 11 subunits: 3 respiratory subunits (MT-CYB, CYC1 and UQCRFS1), 2 core proteins (UQCRC1 and UQCRC2) and 6 low-molecular weight proteins (UQCRH/QCR6, UQCRB/QCR7, UQCRQ/QCR8, UQCR10/QCR9, UQCR11/QCR10 and a cleavage product of UQCRFS1). This cytochrome bc1 complex then forms a dimer.</text>
</comment>
<comment type="subcellular location">
    <subcellularLocation>
        <location evidence="2">Mitochondrion inner membrane</location>
        <topology evidence="2">Multi-pass membrane protein</topology>
    </subcellularLocation>
</comment>
<comment type="miscellaneous">
    <text evidence="1">Heme 1 (or BL or b562) is low-potential and absorbs at about 562 nm, and heme 2 (or BH or b566) is high-potential and absorbs at about 566 nm.</text>
</comment>
<comment type="similarity">
    <text evidence="3 4">Belongs to the cytochrome b family.</text>
</comment>
<comment type="caution">
    <text evidence="2">The full-length protein contains only eight transmembrane helices, not nine as predicted by bioinformatics tools.</text>
</comment>
<geneLocation type="mitochondrion"/>
<organism>
    <name type="scientific">Lobodon carcinophaga</name>
    <name type="common">Crabeater seal</name>
    <name type="synonym">Phoca carcinophaga</name>
    <dbReference type="NCBI Taxonomy" id="101849"/>
    <lineage>
        <taxon>Eukaryota</taxon>
        <taxon>Metazoa</taxon>
        <taxon>Chordata</taxon>
        <taxon>Craniata</taxon>
        <taxon>Vertebrata</taxon>
        <taxon>Euteleostomi</taxon>
        <taxon>Mammalia</taxon>
        <taxon>Eutheria</taxon>
        <taxon>Laurasiatheria</taxon>
        <taxon>Carnivora</taxon>
        <taxon>Caniformia</taxon>
        <taxon>Pinnipedia</taxon>
        <taxon>Phocidae</taxon>
        <taxon>Monachinae</taxon>
        <taxon>Lobodontini</taxon>
        <taxon>Lobodon</taxon>
    </lineage>
</organism>
<proteinExistence type="inferred from homology"/>
<gene>
    <name type="primary">MT-CYB</name>
    <name type="synonym">COB</name>
    <name type="synonym">CYTB</name>
    <name type="synonym">MTCYB</name>
</gene>
<name>CYB_LOBCR</name>
<dbReference type="EMBL" id="AY377321">
    <property type="protein sequence ID" value="AAQ95100.1"/>
    <property type="molecule type" value="Genomic_DNA"/>
</dbReference>
<dbReference type="SMR" id="Q678S9"/>
<dbReference type="GO" id="GO:0005743">
    <property type="term" value="C:mitochondrial inner membrane"/>
    <property type="evidence" value="ECO:0007669"/>
    <property type="project" value="UniProtKB-SubCell"/>
</dbReference>
<dbReference type="GO" id="GO:0045275">
    <property type="term" value="C:respiratory chain complex III"/>
    <property type="evidence" value="ECO:0007669"/>
    <property type="project" value="InterPro"/>
</dbReference>
<dbReference type="GO" id="GO:0046872">
    <property type="term" value="F:metal ion binding"/>
    <property type="evidence" value="ECO:0007669"/>
    <property type="project" value="UniProtKB-KW"/>
</dbReference>
<dbReference type="GO" id="GO:0008121">
    <property type="term" value="F:ubiquinol-cytochrome-c reductase activity"/>
    <property type="evidence" value="ECO:0007669"/>
    <property type="project" value="InterPro"/>
</dbReference>
<dbReference type="GO" id="GO:0006122">
    <property type="term" value="P:mitochondrial electron transport, ubiquinol to cytochrome c"/>
    <property type="evidence" value="ECO:0007669"/>
    <property type="project" value="TreeGrafter"/>
</dbReference>
<dbReference type="CDD" id="cd00290">
    <property type="entry name" value="cytochrome_b_C"/>
    <property type="match status" value="1"/>
</dbReference>
<dbReference type="CDD" id="cd00284">
    <property type="entry name" value="Cytochrome_b_N"/>
    <property type="match status" value="1"/>
</dbReference>
<dbReference type="FunFam" id="1.20.810.10:FF:000002">
    <property type="entry name" value="Cytochrome b"/>
    <property type="match status" value="1"/>
</dbReference>
<dbReference type="Gene3D" id="1.20.810.10">
    <property type="entry name" value="Cytochrome Bc1 Complex, Chain C"/>
    <property type="match status" value="1"/>
</dbReference>
<dbReference type="InterPro" id="IPR005798">
    <property type="entry name" value="Cyt_b/b6_C"/>
</dbReference>
<dbReference type="InterPro" id="IPR036150">
    <property type="entry name" value="Cyt_b/b6_C_sf"/>
</dbReference>
<dbReference type="InterPro" id="IPR005797">
    <property type="entry name" value="Cyt_b/b6_N"/>
</dbReference>
<dbReference type="InterPro" id="IPR027387">
    <property type="entry name" value="Cytb/b6-like_sf"/>
</dbReference>
<dbReference type="InterPro" id="IPR030689">
    <property type="entry name" value="Cytochrome_b"/>
</dbReference>
<dbReference type="InterPro" id="IPR048260">
    <property type="entry name" value="Cytochrome_b_C_euk/bac"/>
</dbReference>
<dbReference type="InterPro" id="IPR048259">
    <property type="entry name" value="Cytochrome_b_N_euk/bac"/>
</dbReference>
<dbReference type="InterPro" id="IPR016174">
    <property type="entry name" value="Di-haem_cyt_TM"/>
</dbReference>
<dbReference type="PANTHER" id="PTHR19271">
    <property type="entry name" value="CYTOCHROME B"/>
    <property type="match status" value="1"/>
</dbReference>
<dbReference type="PANTHER" id="PTHR19271:SF16">
    <property type="entry name" value="CYTOCHROME B"/>
    <property type="match status" value="1"/>
</dbReference>
<dbReference type="Pfam" id="PF00032">
    <property type="entry name" value="Cytochrom_B_C"/>
    <property type="match status" value="1"/>
</dbReference>
<dbReference type="Pfam" id="PF00033">
    <property type="entry name" value="Cytochrome_B"/>
    <property type="match status" value="1"/>
</dbReference>
<dbReference type="PIRSF" id="PIRSF038885">
    <property type="entry name" value="COB"/>
    <property type="match status" value="1"/>
</dbReference>
<dbReference type="SUPFAM" id="SSF81648">
    <property type="entry name" value="a domain/subunit of cytochrome bc1 complex (Ubiquinol-cytochrome c reductase)"/>
    <property type="match status" value="1"/>
</dbReference>
<dbReference type="SUPFAM" id="SSF81342">
    <property type="entry name" value="Transmembrane di-heme cytochromes"/>
    <property type="match status" value="1"/>
</dbReference>
<dbReference type="PROSITE" id="PS51003">
    <property type="entry name" value="CYTB_CTER"/>
    <property type="match status" value="1"/>
</dbReference>
<dbReference type="PROSITE" id="PS51002">
    <property type="entry name" value="CYTB_NTER"/>
    <property type="match status" value="1"/>
</dbReference>
<protein>
    <recommendedName>
        <fullName>Cytochrome b</fullName>
    </recommendedName>
    <alternativeName>
        <fullName>Complex III subunit 3</fullName>
    </alternativeName>
    <alternativeName>
        <fullName>Complex III subunit III</fullName>
    </alternativeName>
    <alternativeName>
        <fullName>Cytochrome b-c1 complex subunit 3</fullName>
    </alternativeName>
    <alternativeName>
        <fullName>Ubiquinol-cytochrome-c reductase complex cytochrome b subunit</fullName>
    </alternativeName>
</protein>